<organism>
    <name type="scientific">Salmonella paratyphi B (strain ATCC BAA-1250 / SPB7)</name>
    <dbReference type="NCBI Taxonomy" id="1016998"/>
    <lineage>
        <taxon>Bacteria</taxon>
        <taxon>Pseudomonadati</taxon>
        <taxon>Pseudomonadota</taxon>
        <taxon>Gammaproteobacteria</taxon>
        <taxon>Enterobacterales</taxon>
        <taxon>Enterobacteriaceae</taxon>
        <taxon>Salmonella</taxon>
    </lineage>
</organism>
<proteinExistence type="inferred from homology"/>
<protein>
    <recommendedName>
        <fullName evidence="1">Outer-membrane lipoprotein LolB</fullName>
    </recommendedName>
</protein>
<comment type="function">
    <text evidence="1">Plays a critical role in the incorporation of lipoproteins in the outer membrane after they are released by the LolA protein.</text>
</comment>
<comment type="subunit">
    <text evidence="1">Monomer.</text>
</comment>
<comment type="subcellular location">
    <subcellularLocation>
        <location evidence="1">Cell outer membrane</location>
        <topology evidence="1">Lipid-anchor</topology>
    </subcellularLocation>
</comment>
<comment type="similarity">
    <text evidence="1">Belongs to the LolB family.</text>
</comment>
<reference key="1">
    <citation type="submission" date="2007-11" db="EMBL/GenBank/DDBJ databases">
        <authorList>
            <consortium name="The Salmonella enterica serovar Paratyphi B Genome Sequencing Project"/>
            <person name="McClelland M."/>
            <person name="Sanderson E.K."/>
            <person name="Porwollik S."/>
            <person name="Spieth J."/>
            <person name="Clifton W.S."/>
            <person name="Fulton R."/>
            <person name="Cordes M."/>
            <person name="Wollam A."/>
            <person name="Shah N."/>
            <person name="Pepin K."/>
            <person name="Bhonagiri V."/>
            <person name="Nash W."/>
            <person name="Johnson M."/>
            <person name="Thiruvilangam P."/>
            <person name="Wilson R."/>
        </authorList>
    </citation>
    <scope>NUCLEOTIDE SEQUENCE [LARGE SCALE GENOMIC DNA]</scope>
    <source>
        <strain>ATCC BAA-1250 / SPB7</strain>
    </source>
</reference>
<feature type="signal peptide" evidence="1">
    <location>
        <begin position="1"/>
        <end position="21"/>
    </location>
</feature>
<feature type="chain" id="PRO_1000078257" description="Outer-membrane lipoprotein LolB">
    <location>
        <begin position="22"/>
        <end position="207"/>
    </location>
</feature>
<feature type="lipid moiety-binding region" description="N-palmitoyl cysteine" evidence="1">
    <location>
        <position position="22"/>
    </location>
</feature>
<feature type="lipid moiety-binding region" description="S-diacylglycerol cysteine" evidence="1">
    <location>
        <position position="22"/>
    </location>
</feature>
<gene>
    <name evidence="1" type="primary">lolB</name>
    <name type="ordered locus">SPAB_01450</name>
</gene>
<evidence type="ECO:0000255" key="1">
    <source>
        <dbReference type="HAMAP-Rule" id="MF_00233"/>
    </source>
</evidence>
<sequence length="207" mass="23686">MTLPDFRLIRLLPLASLVLTACTLPGHKGPGKSPDSPQWRQHQQEVRHLNQYQTRGAFAYISDDQKVYARFFWQQTGQDRYRLLLTNPLGSTELELNAQPGNVQLVDNKGQRYTADDAEEMIGKLTGMPIPLNSLRQWILGLPGDATDYKLDDQYRLSEVNYRQDGKNWKVVYGGYDSKTQPAMPANMELSDGSQRIKLKMDNWIVK</sequence>
<keyword id="KW-0998">Cell outer membrane</keyword>
<keyword id="KW-0143">Chaperone</keyword>
<keyword id="KW-0449">Lipoprotein</keyword>
<keyword id="KW-0472">Membrane</keyword>
<keyword id="KW-0564">Palmitate</keyword>
<keyword id="KW-0653">Protein transport</keyword>
<keyword id="KW-0732">Signal</keyword>
<keyword id="KW-0813">Transport</keyword>
<accession>A9MW01</accession>
<dbReference type="EMBL" id="CP000886">
    <property type="protein sequence ID" value="ABX66857.1"/>
    <property type="molecule type" value="Genomic_DNA"/>
</dbReference>
<dbReference type="RefSeq" id="WP_000174484.1">
    <property type="nucleotide sequence ID" value="NC_010102.1"/>
</dbReference>
<dbReference type="SMR" id="A9MW01"/>
<dbReference type="KEGG" id="spq:SPAB_01450"/>
<dbReference type="PATRIC" id="fig|1016998.12.peg.1369"/>
<dbReference type="HOGENOM" id="CLU_092816_1_1_6"/>
<dbReference type="BioCyc" id="SENT1016998:SPAB_RS05930-MONOMER"/>
<dbReference type="Proteomes" id="UP000008556">
    <property type="component" value="Chromosome"/>
</dbReference>
<dbReference type="GO" id="GO:0009279">
    <property type="term" value="C:cell outer membrane"/>
    <property type="evidence" value="ECO:0007669"/>
    <property type="project" value="UniProtKB-SubCell"/>
</dbReference>
<dbReference type="GO" id="GO:0044874">
    <property type="term" value="P:lipoprotein localization to outer membrane"/>
    <property type="evidence" value="ECO:0007669"/>
    <property type="project" value="UniProtKB-UniRule"/>
</dbReference>
<dbReference type="GO" id="GO:0015031">
    <property type="term" value="P:protein transport"/>
    <property type="evidence" value="ECO:0007669"/>
    <property type="project" value="UniProtKB-KW"/>
</dbReference>
<dbReference type="CDD" id="cd16326">
    <property type="entry name" value="LolB"/>
    <property type="match status" value="1"/>
</dbReference>
<dbReference type="FunFam" id="2.50.20.10:FF:000002">
    <property type="entry name" value="Outer-membrane lipoprotein LolB"/>
    <property type="match status" value="1"/>
</dbReference>
<dbReference type="Gene3D" id="2.50.20.10">
    <property type="entry name" value="Lipoprotein localisation LolA/LolB/LppX"/>
    <property type="match status" value="1"/>
</dbReference>
<dbReference type="HAMAP" id="MF_00233">
    <property type="entry name" value="LolB"/>
    <property type="match status" value="1"/>
</dbReference>
<dbReference type="InterPro" id="IPR029046">
    <property type="entry name" value="LolA/LolB/LppX"/>
</dbReference>
<dbReference type="InterPro" id="IPR004565">
    <property type="entry name" value="OM_lipoprot_LolB"/>
</dbReference>
<dbReference type="NCBIfam" id="TIGR00548">
    <property type="entry name" value="lolB"/>
    <property type="match status" value="1"/>
</dbReference>
<dbReference type="Pfam" id="PF03550">
    <property type="entry name" value="LolB"/>
    <property type="match status" value="1"/>
</dbReference>
<dbReference type="SUPFAM" id="SSF89392">
    <property type="entry name" value="Prokaryotic lipoproteins and lipoprotein localization factors"/>
    <property type="match status" value="1"/>
</dbReference>
<dbReference type="PROSITE" id="PS51257">
    <property type="entry name" value="PROKAR_LIPOPROTEIN"/>
    <property type="match status" value="1"/>
</dbReference>
<name>LOLB_SALPB</name>